<evidence type="ECO:0000255" key="1">
    <source>
        <dbReference type="HAMAP-Rule" id="MF_00004"/>
    </source>
</evidence>
<reference key="1">
    <citation type="journal article" date="2008" name="PLoS ONE">
        <title>Genome sequence of a lancefield group C Streptococcus zooepidemicus strain causing epidemic nephritis: new information about an old disease.</title>
        <authorList>
            <person name="Beres S.B."/>
            <person name="Sesso R."/>
            <person name="Pinto S.W.L."/>
            <person name="Hoe N.P."/>
            <person name="Porcella S.F."/>
            <person name="Deleo F.R."/>
            <person name="Musser J.M."/>
        </authorList>
    </citation>
    <scope>NUCLEOTIDE SEQUENCE [LARGE SCALE GENOMIC DNA]</scope>
    <source>
        <strain>MGCS10565</strain>
    </source>
</reference>
<feature type="chain" id="PRO_1000089008" description="Adenine phosphoribosyltransferase">
    <location>
        <begin position="1"/>
        <end position="172"/>
    </location>
</feature>
<name>APT_STREM</name>
<accession>B4U3L7</accession>
<gene>
    <name evidence="1" type="primary">apt</name>
    <name type="ordered locus">Sez_1244</name>
</gene>
<keyword id="KW-0963">Cytoplasm</keyword>
<keyword id="KW-0328">Glycosyltransferase</keyword>
<keyword id="KW-0660">Purine salvage</keyword>
<keyword id="KW-0808">Transferase</keyword>
<organism>
    <name type="scientific">Streptococcus equi subsp. zooepidemicus (strain MGCS10565)</name>
    <dbReference type="NCBI Taxonomy" id="552526"/>
    <lineage>
        <taxon>Bacteria</taxon>
        <taxon>Bacillati</taxon>
        <taxon>Bacillota</taxon>
        <taxon>Bacilli</taxon>
        <taxon>Lactobacillales</taxon>
        <taxon>Streptococcaceae</taxon>
        <taxon>Streptococcus</taxon>
    </lineage>
</organism>
<proteinExistence type="inferred from homology"/>
<sequence>MDLTQYIASIENYPKEGITFRDISPLMASGKAYSYAIREIVQYACDKDIDMIVGPEARGFIIGCPVAVELGIGFAPVRKPGKLPREVISASYEKEYGLDTLTMHADAIKPGQRVLIVDDLLATGGTVKATIDLVEKLGGIVAGCAFLIELDGLNGRQAIGDYDCKVLMHFPG</sequence>
<protein>
    <recommendedName>
        <fullName evidence="1">Adenine phosphoribosyltransferase</fullName>
        <shortName evidence="1">APRT</shortName>
        <ecNumber evidence="1">2.4.2.7</ecNumber>
    </recommendedName>
</protein>
<comment type="function">
    <text evidence="1">Catalyzes a salvage reaction resulting in the formation of AMP, that is energically less costly than de novo synthesis.</text>
</comment>
<comment type="catalytic activity">
    <reaction evidence="1">
        <text>AMP + diphosphate = 5-phospho-alpha-D-ribose 1-diphosphate + adenine</text>
        <dbReference type="Rhea" id="RHEA:16609"/>
        <dbReference type="ChEBI" id="CHEBI:16708"/>
        <dbReference type="ChEBI" id="CHEBI:33019"/>
        <dbReference type="ChEBI" id="CHEBI:58017"/>
        <dbReference type="ChEBI" id="CHEBI:456215"/>
        <dbReference type="EC" id="2.4.2.7"/>
    </reaction>
</comment>
<comment type="pathway">
    <text evidence="1">Purine metabolism; AMP biosynthesis via salvage pathway; AMP from adenine: step 1/1.</text>
</comment>
<comment type="subunit">
    <text evidence="1">Homodimer.</text>
</comment>
<comment type="subcellular location">
    <subcellularLocation>
        <location evidence="1">Cytoplasm</location>
    </subcellularLocation>
</comment>
<comment type="similarity">
    <text evidence="1">Belongs to the purine/pyrimidine phosphoribosyltransferase family.</text>
</comment>
<dbReference type="EC" id="2.4.2.7" evidence="1"/>
<dbReference type="EMBL" id="CP001129">
    <property type="protein sequence ID" value="ACG62584.1"/>
    <property type="molecule type" value="Genomic_DNA"/>
</dbReference>
<dbReference type="RefSeq" id="WP_012515849.1">
    <property type="nucleotide sequence ID" value="NC_011134.1"/>
</dbReference>
<dbReference type="SMR" id="B4U3L7"/>
<dbReference type="KEGG" id="sez:Sez_1244"/>
<dbReference type="HOGENOM" id="CLU_063339_3_0_9"/>
<dbReference type="UniPathway" id="UPA00588">
    <property type="reaction ID" value="UER00646"/>
</dbReference>
<dbReference type="Proteomes" id="UP000001873">
    <property type="component" value="Chromosome"/>
</dbReference>
<dbReference type="GO" id="GO:0005737">
    <property type="term" value="C:cytoplasm"/>
    <property type="evidence" value="ECO:0007669"/>
    <property type="project" value="UniProtKB-SubCell"/>
</dbReference>
<dbReference type="GO" id="GO:0002055">
    <property type="term" value="F:adenine binding"/>
    <property type="evidence" value="ECO:0007669"/>
    <property type="project" value="TreeGrafter"/>
</dbReference>
<dbReference type="GO" id="GO:0003999">
    <property type="term" value="F:adenine phosphoribosyltransferase activity"/>
    <property type="evidence" value="ECO:0007669"/>
    <property type="project" value="UniProtKB-UniRule"/>
</dbReference>
<dbReference type="GO" id="GO:0016208">
    <property type="term" value="F:AMP binding"/>
    <property type="evidence" value="ECO:0007669"/>
    <property type="project" value="TreeGrafter"/>
</dbReference>
<dbReference type="GO" id="GO:0006168">
    <property type="term" value="P:adenine salvage"/>
    <property type="evidence" value="ECO:0007669"/>
    <property type="project" value="InterPro"/>
</dbReference>
<dbReference type="GO" id="GO:0044209">
    <property type="term" value="P:AMP salvage"/>
    <property type="evidence" value="ECO:0007669"/>
    <property type="project" value="UniProtKB-UniRule"/>
</dbReference>
<dbReference type="GO" id="GO:0006166">
    <property type="term" value="P:purine ribonucleoside salvage"/>
    <property type="evidence" value="ECO:0007669"/>
    <property type="project" value="UniProtKB-KW"/>
</dbReference>
<dbReference type="CDD" id="cd06223">
    <property type="entry name" value="PRTases_typeI"/>
    <property type="match status" value="1"/>
</dbReference>
<dbReference type="FunFam" id="3.40.50.2020:FF:000004">
    <property type="entry name" value="Adenine phosphoribosyltransferase"/>
    <property type="match status" value="1"/>
</dbReference>
<dbReference type="Gene3D" id="3.40.50.2020">
    <property type="match status" value="1"/>
</dbReference>
<dbReference type="HAMAP" id="MF_00004">
    <property type="entry name" value="Aden_phosphoribosyltr"/>
    <property type="match status" value="1"/>
</dbReference>
<dbReference type="InterPro" id="IPR005764">
    <property type="entry name" value="Ade_phspho_trans"/>
</dbReference>
<dbReference type="InterPro" id="IPR000836">
    <property type="entry name" value="PRibTrfase_dom"/>
</dbReference>
<dbReference type="InterPro" id="IPR029057">
    <property type="entry name" value="PRTase-like"/>
</dbReference>
<dbReference type="InterPro" id="IPR050054">
    <property type="entry name" value="UPRTase/APRTase"/>
</dbReference>
<dbReference type="NCBIfam" id="TIGR01090">
    <property type="entry name" value="apt"/>
    <property type="match status" value="1"/>
</dbReference>
<dbReference type="NCBIfam" id="NF002633">
    <property type="entry name" value="PRK02304.1-2"/>
    <property type="match status" value="1"/>
</dbReference>
<dbReference type="NCBIfam" id="NF002634">
    <property type="entry name" value="PRK02304.1-3"/>
    <property type="match status" value="1"/>
</dbReference>
<dbReference type="NCBIfam" id="NF002636">
    <property type="entry name" value="PRK02304.1-5"/>
    <property type="match status" value="1"/>
</dbReference>
<dbReference type="PANTHER" id="PTHR32315">
    <property type="entry name" value="ADENINE PHOSPHORIBOSYLTRANSFERASE"/>
    <property type="match status" value="1"/>
</dbReference>
<dbReference type="PANTHER" id="PTHR32315:SF3">
    <property type="entry name" value="ADENINE PHOSPHORIBOSYLTRANSFERASE"/>
    <property type="match status" value="1"/>
</dbReference>
<dbReference type="Pfam" id="PF00156">
    <property type="entry name" value="Pribosyltran"/>
    <property type="match status" value="1"/>
</dbReference>
<dbReference type="SUPFAM" id="SSF53271">
    <property type="entry name" value="PRTase-like"/>
    <property type="match status" value="1"/>
</dbReference>
<dbReference type="PROSITE" id="PS00103">
    <property type="entry name" value="PUR_PYR_PR_TRANSFER"/>
    <property type="match status" value="1"/>
</dbReference>